<name>YD59B_YEAST</name>
<comment type="subcellular location">
    <subcellularLocation>
        <location evidence="2">Membrane</location>
        <topology evidence="2">Single-pass membrane protein</topology>
    </subcellularLocation>
</comment>
<comment type="miscellaneous">
    <text evidence="2">Completely overlaps STE7.</text>
</comment>
<comment type="caution">
    <text evidence="3">Product of a dubious gene prediction unlikely to encode a functional protein. Because of that it is not part of the S.cerevisiae S288c complete/reference proteome set.</text>
</comment>
<dbReference type="EMBL" id="Z74207">
    <property type="status" value="NOT_ANNOTATED_CDS"/>
    <property type="molecule type" value="Genomic_DNA"/>
</dbReference>
<dbReference type="EMBL" id="AF479939">
    <property type="protein sequence ID" value="AAL79252.1"/>
    <property type="molecule type" value="Genomic_DNA"/>
</dbReference>
<dbReference type="SMR" id="Q8TGP9"/>
<dbReference type="STRING" id="4932.YDL159C-B"/>
<dbReference type="PaxDb" id="4932-YDL159C-B"/>
<dbReference type="EnsemblFungi" id="YDL159C-B_mRNA">
    <property type="protein sequence ID" value="YDL159C-B"/>
    <property type="gene ID" value="YDL159C-B"/>
</dbReference>
<dbReference type="AGR" id="SGD:S000028612"/>
<dbReference type="SGD" id="S000028612">
    <property type="gene designation" value="YDL159C-B"/>
</dbReference>
<dbReference type="HOGENOM" id="CLU_2980369_0_0_1"/>
<dbReference type="GO" id="GO:0016020">
    <property type="term" value="C:membrane"/>
    <property type="evidence" value="ECO:0007669"/>
    <property type="project" value="UniProtKB-SubCell"/>
</dbReference>
<organism>
    <name type="scientific">Saccharomyces cerevisiae (strain ATCC 204508 / S288c)</name>
    <name type="common">Baker's yeast</name>
    <dbReference type="NCBI Taxonomy" id="559292"/>
    <lineage>
        <taxon>Eukaryota</taxon>
        <taxon>Fungi</taxon>
        <taxon>Dikarya</taxon>
        <taxon>Ascomycota</taxon>
        <taxon>Saccharomycotina</taxon>
        <taxon>Saccharomycetes</taxon>
        <taxon>Saccharomycetales</taxon>
        <taxon>Saccharomycetaceae</taxon>
        <taxon>Saccharomyces</taxon>
    </lineage>
</organism>
<sequence>MFSWGLTFLTIDNSLTNWLMIVLLFCSTGMVFLATILESGTCSAFTTVPEFPAPIFPN</sequence>
<evidence type="ECO:0000255" key="1"/>
<evidence type="ECO:0000305" key="2"/>
<evidence type="ECO:0000305" key="3">
    <source>
    </source>
</evidence>
<gene>
    <name type="ordered locus">YDL159C-B</name>
</gene>
<accession>Q8TGP9</accession>
<feature type="chain" id="PRO_0000299859" description="Putative uncharacterized protein YDL159C-B">
    <location>
        <begin position="1"/>
        <end position="58"/>
    </location>
</feature>
<feature type="transmembrane region" description="Helical" evidence="1">
    <location>
        <begin position="18"/>
        <end position="38"/>
    </location>
</feature>
<reference key="1">
    <citation type="journal article" date="1997" name="Nature">
        <title>The nucleotide sequence of Saccharomyces cerevisiae chromosome IV.</title>
        <authorList>
            <person name="Jacq C."/>
            <person name="Alt-Moerbe J."/>
            <person name="Andre B."/>
            <person name="Arnold W."/>
            <person name="Bahr A."/>
            <person name="Ballesta J.P.G."/>
            <person name="Bargues M."/>
            <person name="Baron L."/>
            <person name="Becker A."/>
            <person name="Biteau N."/>
            <person name="Bloecker H."/>
            <person name="Blugeon C."/>
            <person name="Boskovic J."/>
            <person name="Brandt P."/>
            <person name="Brueckner M."/>
            <person name="Buitrago M.J."/>
            <person name="Coster F."/>
            <person name="Delaveau T."/>
            <person name="del Rey F."/>
            <person name="Dujon B."/>
            <person name="Eide L.G."/>
            <person name="Garcia-Cantalejo J.M."/>
            <person name="Goffeau A."/>
            <person name="Gomez-Peris A."/>
            <person name="Granotier C."/>
            <person name="Hanemann V."/>
            <person name="Hankeln T."/>
            <person name="Hoheisel J.D."/>
            <person name="Jaeger W."/>
            <person name="Jimenez A."/>
            <person name="Jonniaux J.-L."/>
            <person name="Kraemer C."/>
            <person name="Kuester H."/>
            <person name="Laamanen P."/>
            <person name="Legros Y."/>
            <person name="Louis E.J."/>
            <person name="Moeller-Rieker S."/>
            <person name="Monnet A."/>
            <person name="Moro M."/>
            <person name="Mueller-Auer S."/>
            <person name="Nussbaumer B."/>
            <person name="Paricio N."/>
            <person name="Paulin L."/>
            <person name="Perea J."/>
            <person name="Perez-Alonso M."/>
            <person name="Perez-Ortin J.E."/>
            <person name="Pohl T.M."/>
            <person name="Prydz H."/>
            <person name="Purnelle B."/>
            <person name="Rasmussen S.W."/>
            <person name="Remacha M.A."/>
            <person name="Revuelta J.L."/>
            <person name="Rieger M."/>
            <person name="Salom D."/>
            <person name="Saluz H.P."/>
            <person name="Saiz J.E."/>
            <person name="Saren A.-M."/>
            <person name="Schaefer M."/>
            <person name="Scharfe M."/>
            <person name="Schmidt E.R."/>
            <person name="Schneider C."/>
            <person name="Scholler P."/>
            <person name="Schwarz S."/>
            <person name="Soler-Mira A."/>
            <person name="Urrestarazu L.A."/>
            <person name="Verhasselt P."/>
            <person name="Vissers S."/>
            <person name="Voet M."/>
            <person name="Volckaert G."/>
            <person name="Wagner G."/>
            <person name="Wambutt R."/>
            <person name="Wedler E."/>
            <person name="Wedler H."/>
            <person name="Woelfl S."/>
            <person name="Harris D.E."/>
            <person name="Bowman S."/>
            <person name="Brown D."/>
            <person name="Churcher C.M."/>
            <person name="Connor R."/>
            <person name="Dedman K."/>
            <person name="Gentles S."/>
            <person name="Hamlin N."/>
            <person name="Hunt S."/>
            <person name="Jones L."/>
            <person name="McDonald S."/>
            <person name="Murphy L.D."/>
            <person name="Niblett D."/>
            <person name="Odell C."/>
            <person name="Oliver K."/>
            <person name="Rajandream M.A."/>
            <person name="Richards C."/>
            <person name="Shore L."/>
            <person name="Walsh S.V."/>
            <person name="Barrell B.G."/>
            <person name="Dietrich F.S."/>
            <person name="Mulligan J.T."/>
            <person name="Allen E."/>
            <person name="Araujo R."/>
            <person name="Aviles E."/>
            <person name="Berno A."/>
            <person name="Carpenter J."/>
            <person name="Chen E."/>
            <person name="Cherry J.M."/>
            <person name="Chung E."/>
            <person name="Duncan M."/>
            <person name="Hunicke-Smith S."/>
            <person name="Hyman R.W."/>
            <person name="Komp C."/>
            <person name="Lashkari D."/>
            <person name="Lew H."/>
            <person name="Lin D."/>
            <person name="Mosedale D."/>
            <person name="Nakahara K."/>
            <person name="Namath A."/>
            <person name="Oefner P."/>
            <person name="Oh C."/>
            <person name="Petel F.X."/>
            <person name="Roberts D."/>
            <person name="Schramm S."/>
            <person name="Schroeder M."/>
            <person name="Shogren T."/>
            <person name="Shroff N."/>
            <person name="Winant A."/>
            <person name="Yelton M.A."/>
            <person name="Botstein D."/>
            <person name="Davis R.W."/>
            <person name="Johnston M."/>
            <person name="Andrews S."/>
            <person name="Brinkman R."/>
            <person name="Cooper J."/>
            <person name="Ding H."/>
            <person name="Du Z."/>
            <person name="Favello A."/>
            <person name="Fulton L."/>
            <person name="Gattung S."/>
            <person name="Greco T."/>
            <person name="Hallsworth K."/>
            <person name="Hawkins J."/>
            <person name="Hillier L.W."/>
            <person name="Jier M."/>
            <person name="Johnson D."/>
            <person name="Johnston L."/>
            <person name="Kirsten J."/>
            <person name="Kucaba T."/>
            <person name="Langston Y."/>
            <person name="Latreille P."/>
            <person name="Le T."/>
            <person name="Mardis E."/>
            <person name="Menezes S."/>
            <person name="Miller N."/>
            <person name="Nhan M."/>
            <person name="Pauley A."/>
            <person name="Peluso D."/>
            <person name="Rifkin L."/>
            <person name="Riles L."/>
            <person name="Taich A."/>
            <person name="Trevaskis E."/>
            <person name="Vignati D."/>
            <person name="Wilcox L."/>
            <person name="Wohldman P."/>
            <person name="Vaudin M."/>
            <person name="Wilson R."/>
            <person name="Waterston R."/>
            <person name="Albermann K."/>
            <person name="Hani J."/>
            <person name="Heumann K."/>
            <person name="Kleine K."/>
            <person name="Mewes H.-W."/>
            <person name="Zollner A."/>
            <person name="Zaccaria P."/>
        </authorList>
    </citation>
    <scope>NUCLEOTIDE SEQUENCE [LARGE SCALE GENOMIC DNA]</scope>
    <source>
        <strain>ATCC 204508 / S288c</strain>
    </source>
</reference>
<reference key="2">
    <citation type="journal article" date="2014" name="G3 (Bethesda)">
        <title>The reference genome sequence of Saccharomyces cerevisiae: Then and now.</title>
        <authorList>
            <person name="Engel S.R."/>
            <person name="Dietrich F.S."/>
            <person name="Fisk D.G."/>
            <person name="Binkley G."/>
            <person name="Balakrishnan R."/>
            <person name="Costanzo M.C."/>
            <person name="Dwight S.S."/>
            <person name="Hitz B.C."/>
            <person name="Karra K."/>
            <person name="Nash R.S."/>
            <person name="Weng S."/>
            <person name="Wong E.D."/>
            <person name="Lloyd P."/>
            <person name="Skrzypek M.S."/>
            <person name="Miyasato S.R."/>
            <person name="Simison M."/>
            <person name="Cherry J.M."/>
        </authorList>
    </citation>
    <scope>GENOME REANNOTATION</scope>
    <source>
        <strain>ATCC 204508 / S288c</strain>
    </source>
</reference>
<reference key="3">
    <citation type="journal article" date="2002" name="Nat. Biotechnol.">
        <title>An integrated approach for finding overlooked genes in yeast.</title>
        <authorList>
            <person name="Kumar A."/>
            <person name="Harrison P.M."/>
            <person name="Cheung K.-H."/>
            <person name="Lan N."/>
            <person name="Echols N."/>
            <person name="Bertone P."/>
            <person name="Miller P."/>
            <person name="Gerstein M.B."/>
            <person name="Snyder M."/>
        </authorList>
    </citation>
    <scope>NUCLEOTIDE SEQUENCE [GENOMIC DNA]</scope>
</reference>
<keyword id="KW-0472">Membrane</keyword>
<keyword id="KW-0812">Transmembrane</keyword>
<keyword id="KW-1133">Transmembrane helix</keyword>
<protein>
    <recommendedName>
        <fullName>Putative uncharacterized protein YDL159C-B</fullName>
    </recommendedName>
</protein>
<proteinExistence type="uncertain"/>